<organism>
    <name type="scientific">Cercocebus atys</name>
    <name type="common">Sooty mangabey</name>
    <name type="synonym">Cercocebus torquatus atys</name>
    <dbReference type="NCBI Taxonomy" id="9531"/>
    <lineage>
        <taxon>Eukaryota</taxon>
        <taxon>Metazoa</taxon>
        <taxon>Chordata</taxon>
        <taxon>Craniata</taxon>
        <taxon>Vertebrata</taxon>
        <taxon>Euteleostomi</taxon>
        <taxon>Mammalia</taxon>
        <taxon>Eutheria</taxon>
        <taxon>Euarchontoglires</taxon>
        <taxon>Primates</taxon>
        <taxon>Haplorrhini</taxon>
        <taxon>Catarrhini</taxon>
        <taxon>Cercopithecidae</taxon>
        <taxon>Cercopithecinae</taxon>
        <taxon>Cercocebus</taxon>
    </lineage>
</organism>
<proteinExistence type="evidence at transcript level"/>
<accession>B6CJY4</accession>
<sequence length="522" mass="59479">MSLLNCENSCGSSQSESDCCVAMASSCSAATKDDSVGGTASTGNLSSSFMEEIQGYDVEFDPPLESKYECPICLMALREAVQTPCGHRFCKACIIKSIRDAGHKCPVDNEILLENQLFPDNFAKREILSLMVKCPNEGCLHKMELRHLEDHQAHCEFALVDCPQCQRPFQKFHINIHILKDCPRRQVSCDNCAALVAFEDKEIHDQNCPLANVICEYCNTILIREQMPNHYDLDCPTAPIPCTFSTFGCHEKMQRNHLARHLQENTQSHMRMLAQAVHSLSLIPDSGYVSEVRNFQETIHQLEGRLVRQDHQIRELTAKMETQSTYVSELKRTIRTLEDKVAEIEAQQCNGIYIWKIGNFGMHLKCQEEEKPVVIHSPGFYTGKPGYKLCMRLHLQLPTAQRCANYISLFVHTMQGEYDSHLPWPFQGTIRLTILDQSEAPVRQNHEEIMDAKPDLLAFQRPTIPRNPKGFGYVTFMHLEALRQRTFIKDDTLLVRCEVSTRFDMGSLRREGFQPRSTDSGV</sequence>
<reference key="1">
    <citation type="journal article" date="2008" name="Nat. Med.">
        <title>Divergent TLR7 and TLR9 signaling and type I interferon production distinguish pathogenic and nonpathogenic AIDS virus infections.</title>
        <authorList>
            <person name="Mandl J.N."/>
            <person name="Barry A.P."/>
            <person name="Vanderford T.H."/>
            <person name="Kozyr N."/>
            <person name="Chavan R."/>
            <person name="Klucking S."/>
            <person name="Barrat F.J."/>
            <person name="Coffman R.L."/>
            <person name="Staprans S.I."/>
            <person name="Feinberg M.B."/>
        </authorList>
    </citation>
    <scope>NUCLEOTIDE SEQUENCE [MRNA]</scope>
</reference>
<feature type="chain" id="PRO_0000391608" description="TNF receptor-associated factor 6">
    <location>
        <begin position="1"/>
        <end position="522"/>
    </location>
</feature>
<feature type="domain" description="MATH" evidence="5">
    <location>
        <begin position="350"/>
        <end position="499"/>
    </location>
</feature>
<feature type="zinc finger region" description="RING-type; degenerate" evidence="6">
    <location>
        <begin position="70"/>
        <end position="109"/>
    </location>
</feature>
<feature type="zinc finger region" description="TRAF-type 1" evidence="7">
    <location>
        <begin position="150"/>
        <end position="202"/>
    </location>
</feature>
<feature type="zinc finger region" description="TRAF-type 2" evidence="7">
    <location>
        <begin position="203"/>
        <end position="259"/>
    </location>
</feature>
<feature type="region of interest" description="Interaction with TAX1BP1" evidence="1">
    <location>
        <begin position="1"/>
        <end position="354"/>
    </location>
</feature>
<feature type="region of interest" description="Interaction with TANK" evidence="3">
    <location>
        <begin position="355"/>
        <end position="522"/>
    </location>
</feature>
<feature type="coiled-coil region" evidence="4">
    <location>
        <begin position="288"/>
        <end position="348"/>
    </location>
</feature>
<feature type="cross-link" description="Glycyl lysine isopeptide (Lys-Gly) (interchain with G-Cter in SUMO); alternate" evidence="1">
    <location>
        <position position="124"/>
    </location>
</feature>
<feature type="cross-link" description="Glycyl lysine isopeptide (Lys-Gly) (interchain with G-Cter in ubiquitin); alternate" evidence="3">
    <location>
        <position position="124"/>
    </location>
</feature>
<feature type="cross-link" description="Glycyl lysine isopeptide (Lys-Gly) (interchain with G-Cter in SUMO)" evidence="1">
    <location>
        <position position="142"/>
    </location>
</feature>
<feature type="cross-link" description="Glycyl lysine isopeptide (Lys-Gly) (interchain with G-Cter in ubiquitin)" evidence="2">
    <location>
        <position position="319"/>
    </location>
</feature>
<feature type="cross-link" description="Glycyl lysine isopeptide (Lys-Gly) (interchain with G-Cter in SUMO)" evidence="1">
    <location>
        <position position="453"/>
    </location>
</feature>
<protein>
    <recommendedName>
        <fullName>TNF receptor-associated factor 6</fullName>
        <ecNumber evidence="3">2.3.2.27</ecNumber>
    </recommendedName>
    <alternativeName>
        <fullName>E3 ubiquitin-protein ligase TRAF6</fullName>
    </alternativeName>
    <alternativeName>
        <fullName evidence="8">RING-type E3 ubiquitin transferase TRAF6</fullName>
    </alternativeName>
</protein>
<evidence type="ECO:0000250" key="1"/>
<evidence type="ECO:0000250" key="2">
    <source>
        <dbReference type="UniProtKB" id="P70196"/>
    </source>
</evidence>
<evidence type="ECO:0000250" key="3">
    <source>
        <dbReference type="UniProtKB" id="Q9Y4K3"/>
    </source>
</evidence>
<evidence type="ECO:0000255" key="4"/>
<evidence type="ECO:0000255" key="5">
    <source>
        <dbReference type="PROSITE-ProRule" id="PRU00129"/>
    </source>
</evidence>
<evidence type="ECO:0000255" key="6">
    <source>
        <dbReference type="PROSITE-ProRule" id="PRU00175"/>
    </source>
</evidence>
<evidence type="ECO:0000255" key="7">
    <source>
        <dbReference type="PROSITE-ProRule" id="PRU00207"/>
    </source>
</evidence>
<evidence type="ECO:0000305" key="8"/>
<keyword id="KW-0175">Coiled coil</keyword>
<keyword id="KW-0963">Cytoplasm</keyword>
<keyword id="KW-0227">DNA damage</keyword>
<keyword id="KW-0391">Immunity</keyword>
<keyword id="KW-1017">Isopeptide bond</keyword>
<keyword id="KW-0551">Lipid droplet</keyword>
<keyword id="KW-0479">Metal-binding</keyword>
<keyword id="KW-0539">Nucleus</keyword>
<keyword id="KW-0987">Osteopetrosis</keyword>
<keyword id="KW-1185">Reference proteome</keyword>
<keyword id="KW-0677">Repeat</keyword>
<keyword id="KW-0808">Transferase</keyword>
<keyword id="KW-0832">Ubl conjugation</keyword>
<keyword id="KW-0833">Ubl conjugation pathway</keyword>
<keyword id="KW-0862">Zinc</keyword>
<keyword id="KW-0863">Zinc-finger</keyword>
<comment type="function">
    <text evidence="2 3">E3 ubiquitin ligase that, together with UBE2N and UBE2V1, mediates the synthesis of 'Lys-63'-linked-polyubiquitin chains conjugated to proteins, such as ECSIT, IKBKG, IRAK1, AKT1 and AKT2. Also mediates ubiquitination of free/unanchored polyubiquitin chain that leads to MAP3K7 activation. Leads to the activation of NF-kappa-B and JUN (By similarity). Seems to also play a role in dendritic cells (DCs) maturation and/or activation (By similarity). Represses c-Myb-mediated transactivation, in B-lymphocytes. Adapter protein that seems to play a role in signal transduction initiated via TNF receptor, IL-1 receptor and IL-17 receptor (By similarity). Regulates osteoclast differentiation by mediating the activation of adapter protein complex 1 (AP-1) and NF-kappa-B, in response to RANK-L stimulation (By similarity). Together with MAP3K8, mediates CD40 signals that activate ERK in B-cells and macrophages, and thus may play a role in the regulation of immunoglobulin production (By similarity). Acts as a regulator of the JNK and NF-kappa-B signaling pathways by initiating assembly of heterotypic 'Lys-63'-/'Lys-48'-linked branched ubiquitin chains that are then recognized by TAB2: TRAF6 catalyzes initial 'Lys-63'-linked-polyubiquitin chains that are then branched via 'Lys-48'-linked polyubiquitin by HUWE1. 'Lys-63'-/'Lys-48'-linked branched ubiquitin chains protect 'Lys-63'-linkages from CYLD deubiquitination. Also participates in the TCR signaling by ubiquitinating LAT (By similarity).</text>
</comment>
<comment type="catalytic activity">
    <reaction evidence="3">
        <text>S-ubiquitinyl-[E2 ubiquitin-conjugating enzyme]-L-cysteine + [acceptor protein]-L-lysine = [E2 ubiquitin-conjugating enzyme]-L-cysteine + N(6)-ubiquitinyl-[acceptor protein]-L-lysine.</text>
        <dbReference type="EC" id="2.3.2.27"/>
    </reaction>
</comment>
<comment type="pathway">
    <text evidence="3">Protein modification; protein ubiquitination.</text>
</comment>
<comment type="subunit">
    <text evidence="2 3">Homotrimer. Homooligomer. N-terminal region is dimeric while C-terminal region is trimeric; maybe providing a mode of oligomerization. Upon IL1B treatment, forms a complex with PELI1, IRAK1, IRAK4 and MYD88; this complex recruits MAP3K7/TAK1, TAB1 and TAB2 to mediate NF-kappa-B activation. Direct binding of SMAD6 to PELI1 prevents the complex formation and hence negatively regulates IL1R-TLR signaling and eventually NF-kappa-B-mediated gene expression. Binds to TNFRSF5/CD40 and TNFRSF11A/RANK. Associates with NGFR, TNFRSF17, IRAK2, IRAK3, RIPK2, MAP3K1, MAP3K5, MAP3K14, CSK, TRAF, TRAF-interacting protein TRIP and TNF receptor associated protein TDP2. Interacts with IL17R. Interacts with SQSTM1 bridging NTRK1 and NGFR. Forms a ternary complex with SQSTM1 and PRKCZ (By similarity). Interacts with PELI2 and PELI3. Binds UBE2V1. Interacts with TAX1BP1; this interaction mediates deubiquitination of TRAF6 and inhibition of NF-kappa-B activation (By similarity). Interacts with ZNF675. Interacts with ARRB1 and ARRB2. Interacts with MAP3K7 and TAB1/MAP3K7IP1; during IL-1 signaling. Interacts with UBE2N. Interacts with TGFBR1, HDAC1 and RANGAP1. Interacts with AKT1, AKT2 and AKT3. Interacts (via TRAF domains) with NUMBL (via C-terminal). Interacts with RBCK1. Interacts with LIMD1 (via LIM domains) (By similarity). Interacts with RSAD2/viperin (By similarity). Interacts (via C-terminus) with EIF2AK2/PKR (via the kinase catalytic domain) (By similarity). Interacts with ZFAND5. Interacts with IL1RL1. Interacts with TRAFD1. Interacts with AJUBA. Interacts with MAVS/IPS1. Interacts (via TRAF domains) with DYNC2I2 (via WD domains). Interacts with IFIT3 (via N-terminus). Interacts with TICAM2. Interacts with CARD14. Interacts with CD40 and MAP3K8; the interaction is required for ERK activation (By similarity). Interacts with TICAM1 and this interaction is enhanced in the presence of WDFY1. Interacts with TANK; this interaction increases in response to DNA damage. Interacts with USP10; this interaction increases in response to DNA damage. Interacts with ZC3H12A; this interaction increases in response to DNA damage and is stimulated by TANK (By similarity). Interacts with WDFY3 (By similarity). Interacts with TRIM13 (By similarity). Interacts with GPS2 (By similarity). Interacts (via C-terminus) with SASH1. Interacts with LRRC19. Interacts with IL17RA and TRAF3IP2. Interacts with TOMM70. Interacts with AMBRA1; interaction is required to mediate 'Lys-63'-linked ubiquitination of ULK1 (By similarity). Interacts with CRBN; this interaction inhibits TLR4-mediated signaling by preventing TRAF6-mediated ubiquitination of ECSIT (By similarity).</text>
</comment>
<comment type="subcellular location">
    <subcellularLocation>
        <location evidence="3">Cytoplasm</location>
    </subcellularLocation>
    <subcellularLocation>
        <location evidence="3">Cytoplasm</location>
        <location evidence="3">Cell cortex</location>
    </subcellularLocation>
    <subcellularLocation>
        <location evidence="3">Nucleus</location>
    </subcellularLocation>
    <subcellularLocation>
        <location evidence="2">Lipid droplet</location>
    </subcellularLocation>
    <text evidence="2">RSAD2/viperin recruits it to the lipid droplet.</text>
</comment>
<comment type="domain">
    <text evidence="3">The coiled coil domain mediates homo- and hetero-oligomerization.</text>
</comment>
<comment type="domain">
    <text evidence="3">The MATH/TRAF domain binds to receptor cytoplasmic domains.</text>
</comment>
<comment type="PTM">
    <text evidence="3">Sumoylated on Lys-124, Lys-142 and Lys-453 with SUMO1.</text>
</comment>
<comment type="PTM">
    <text evidence="2 3">Polyubiquitinated on Lys-124 by TRAF3IP2; after cell stimulation with IL17A (By similarity). Polyubiquitinated on Lys-124; after cell stimulation with IL1B or TGFB. This ligand-induced cell stimulation leads to dimerization/oligomerization of TRAF6 molecules, followed by auto-ubiquitination which involves UBE2N and UBE2V1 and leads to TRAF6 activation. This 'Lys-63' site-specific poly-ubiquitination appears to be associated with the activation of signaling molecules. Deubiquitinated by USP10 in a TANK-dependent manner, leading to the negative regulation of NF-kappa-B signaling upon DNA damage. LRRC19 induces 'Lys-63' ubiquitination (By similarity). Ubiquitinated at Lys-319 by the SCF(FBXL2) complex, leading to its degradation by the proteasome (By similarity).</text>
</comment>
<comment type="similarity">
    <text evidence="8">Belongs to the TNF receptor-associated factor family. A subfamily.</text>
</comment>
<name>TRAF6_CERAT</name>
<gene>
    <name type="primary">TRAF6</name>
</gene>
<dbReference type="EC" id="2.3.2.27" evidence="3"/>
<dbReference type="EMBL" id="EU204928">
    <property type="protein sequence ID" value="ABY64982.1"/>
    <property type="molecule type" value="mRNA"/>
</dbReference>
<dbReference type="RefSeq" id="NP_001292890.1">
    <property type="nucleotide sequence ID" value="NM_001305961.1"/>
</dbReference>
<dbReference type="BMRB" id="B6CJY4"/>
<dbReference type="SMR" id="B6CJY4"/>
<dbReference type="STRING" id="9531.ENSCATP00000012971"/>
<dbReference type="Ensembl" id="ENSCATT00000037104.1">
    <property type="protein sequence ID" value="ENSCATP00000012971.1"/>
    <property type="gene ID" value="ENSCATG00000030633.1"/>
</dbReference>
<dbReference type="GeneID" id="105586809"/>
<dbReference type="CTD" id="7189"/>
<dbReference type="GeneTree" id="ENSGT00940000155426"/>
<dbReference type="OMA" id="FMHLQAL"/>
<dbReference type="UniPathway" id="UPA00143"/>
<dbReference type="Proteomes" id="UP000233060">
    <property type="component" value="Unassembled WGS sequence"/>
</dbReference>
<dbReference type="Bgee" id="ENSCATG00000030633">
    <property type="expression patterns" value="Expressed in skeletal muscle tissue and 12 other cell types or tissues"/>
</dbReference>
<dbReference type="GO" id="GO:0035631">
    <property type="term" value="C:CD40 receptor complex"/>
    <property type="evidence" value="ECO:0007669"/>
    <property type="project" value="Ensembl"/>
</dbReference>
<dbReference type="GO" id="GO:0005938">
    <property type="term" value="C:cell cortex"/>
    <property type="evidence" value="ECO:0007669"/>
    <property type="project" value="UniProtKB-SubCell"/>
</dbReference>
<dbReference type="GO" id="GO:0009898">
    <property type="term" value="C:cytoplasmic side of plasma membrane"/>
    <property type="evidence" value="ECO:0007669"/>
    <property type="project" value="Ensembl"/>
</dbReference>
<dbReference type="GO" id="GO:0005829">
    <property type="term" value="C:cytosol"/>
    <property type="evidence" value="ECO:0007669"/>
    <property type="project" value="Ensembl"/>
</dbReference>
<dbReference type="GO" id="GO:0098978">
    <property type="term" value="C:glutamatergic synapse"/>
    <property type="evidence" value="ECO:0007669"/>
    <property type="project" value="Ensembl"/>
</dbReference>
<dbReference type="GO" id="GO:0005811">
    <property type="term" value="C:lipid droplet"/>
    <property type="evidence" value="ECO:0000250"/>
    <property type="project" value="UniProtKB"/>
</dbReference>
<dbReference type="GO" id="GO:0005634">
    <property type="term" value="C:nucleus"/>
    <property type="evidence" value="ECO:0007669"/>
    <property type="project" value="UniProtKB-SubCell"/>
</dbReference>
<dbReference type="GO" id="GO:0048471">
    <property type="term" value="C:perinuclear region of cytoplasm"/>
    <property type="evidence" value="ECO:0007669"/>
    <property type="project" value="Ensembl"/>
</dbReference>
<dbReference type="GO" id="GO:0042826">
    <property type="term" value="F:histone deacetylase binding"/>
    <property type="evidence" value="ECO:0007669"/>
    <property type="project" value="Ensembl"/>
</dbReference>
<dbReference type="GO" id="GO:0042802">
    <property type="term" value="F:identical protein binding"/>
    <property type="evidence" value="ECO:0007669"/>
    <property type="project" value="Ensembl"/>
</dbReference>
<dbReference type="GO" id="GO:0043422">
    <property type="term" value="F:protein kinase B binding"/>
    <property type="evidence" value="ECO:0007669"/>
    <property type="project" value="Ensembl"/>
</dbReference>
<dbReference type="GO" id="GO:0030674">
    <property type="term" value="F:protein-macromolecule adaptor activity"/>
    <property type="evidence" value="ECO:0007669"/>
    <property type="project" value="Ensembl"/>
</dbReference>
<dbReference type="GO" id="GO:0005164">
    <property type="term" value="F:tumor necrosis factor receptor binding"/>
    <property type="evidence" value="ECO:0007669"/>
    <property type="project" value="InterPro"/>
</dbReference>
<dbReference type="GO" id="GO:0031624">
    <property type="term" value="F:ubiquitin conjugating enzyme binding"/>
    <property type="evidence" value="ECO:0007669"/>
    <property type="project" value="Ensembl"/>
</dbReference>
<dbReference type="GO" id="GO:0004842">
    <property type="term" value="F:ubiquitin-protein transferase activity"/>
    <property type="evidence" value="ECO:0000250"/>
    <property type="project" value="UniProtKB"/>
</dbReference>
<dbReference type="GO" id="GO:0034450">
    <property type="term" value="F:ubiquitin-ubiquitin ligase activity"/>
    <property type="evidence" value="ECO:0007669"/>
    <property type="project" value="Ensembl"/>
</dbReference>
<dbReference type="GO" id="GO:0008270">
    <property type="term" value="F:zinc ion binding"/>
    <property type="evidence" value="ECO:0007669"/>
    <property type="project" value="UniProtKB-KW"/>
</dbReference>
<dbReference type="GO" id="GO:0019886">
    <property type="term" value="P:antigen processing and presentation of exogenous peptide antigen via MHC class II"/>
    <property type="evidence" value="ECO:0007669"/>
    <property type="project" value="Ensembl"/>
</dbReference>
<dbReference type="GO" id="GO:0140374">
    <property type="term" value="P:antiviral innate immune response"/>
    <property type="evidence" value="ECO:0007669"/>
    <property type="project" value="Ensembl"/>
</dbReference>
<dbReference type="GO" id="GO:0000045">
    <property type="term" value="P:autophagosome assembly"/>
    <property type="evidence" value="ECO:0007669"/>
    <property type="project" value="Ensembl"/>
</dbReference>
<dbReference type="GO" id="GO:0045453">
    <property type="term" value="P:bone resorption"/>
    <property type="evidence" value="ECO:0007669"/>
    <property type="project" value="Ensembl"/>
</dbReference>
<dbReference type="GO" id="GO:0007249">
    <property type="term" value="P:canonical NF-kappaB signal transduction"/>
    <property type="evidence" value="ECO:0007669"/>
    <property type="project" value="Ensembl"/>
</dbReference>
<dbReference type="GO" id="GO:0023035">
    <property type="term" value="P:CD40 signaling pathway"/>
    <property type="evidence" value="ECO:0007669"/>
    <property type="project" value="Ensembl"/>
</dbReference>
<dbReference type="GO" id="GO:0002753">
    <property type="term" value="P:cytoplasmic pattern recognition receptor signaling pathway"/>
    <property type="evidence" value="ECO:0007669"/>
    <property type="project" value="Ensembl"/>
</dbReference>
<dbReference type="GO" id="GO:0006974">
    <property type="term" value="P:DNA damage response"/>
    <property type="evidence" value="ECO:0007669"/>
    <property type="project" value="UniProtKB-KW"/>
</dbReference>
<dbReference type="GO" id="GO:0001701">
    <property type="term" value="P:in utero embryonic development"/>
    <property type="evidence" value="ECO:0007669"/>
    <property type="project" value="Ensembl"/>
</dbReference>
<dbReference type="GO" id="GO:0070498">
    <property type="term" value="P:interleukin-1-mediated signaling pathway"/>
    <property type="evidence" value="ECO:0007669"/>
    <property type="project" value="Ensembl"/>
</dbReference>
<dbReference type="GO" id="GO:0097400">
    <property type="term" value="P:interleukin-17-mediated signaling pathway"/>
    <property type="evidence" value="ECO:0007669"/>
    <property type="project" value="Ensembl"/>
</dbReference>
<dbReference type="GO" id="GO:0038173">
    <property type="term" value="P:interleukin-17A-mediated signaling pathway"/>
    <property type="evidence" value="ECO:0007669"/>
    <property type="project" value="Ensembl"/>
</dbReference>
<dbReference type="GO" id="GO:0038172">
    <property type="term" value="P:interleukin-33-mediated signaling pathway"/>
    <property type="evidence" value="ECO:0007669"/>
    <property type="project" value="Ensembl"/>
</dbReference>
<dbReference type="GO" id="GO:0031663">
    <property type="term" value="P:lipopolysaccharide-mediated signaling pathway"/>
    <property type="evidence" value="ECO:0007669"/>
    <property type="project" value="Ensembl"/>
</dbReference>
<dbReference type="GO" id="GO:0043011">
    <property type="term" value="P:myeloid dendritic cell differentiation"/>
    <property type="evidence" value="ECO:0007669"/>
    <property type="project" value="Ensembl"/>
</dbReference>
<dbReference type="GO" id="GO:0000122">
    <property type="term" value="P:negative regulation of transcription by RNA polymerase II"/>
    <property type="evidence" value="ECO:0007669"/>
    <property type="project" value="Ensembl"/>
</dbReference>
<dbReference type="GO" id="GO:0001843">
    <property type="term" value="P:neural tube closure"/>
    <property type="evidence" value="ECO:0007669"/>
    <property type="project" value="Ensembl"/>
</dbReference>
<dbReference type="GO" id="GO:0038061">
    <property type="term" value="P:non-canonical NF-kappaB signal transduction"/>
    <property type="evidence" value="ECO:0007669"/>
    <property type="project" value="Ensembl"/>
</dbReference>
<dbReference type="GO" id="GO:0042475">
    <property type="term" value="P:odontogenesis of dentin-containing tooth"/>
    <property type="evidence" value="ECO:0007669"/>
    <property type="project" value="Ensembl"/>
</dbReference>
<dbReference type="GO" id="GO:0001503">
    <property type="term" value="P:ossification"/>
    <property type="evidence" value="ECO:0007669"/>
    <property type="project" value="Ensembl"/>
</dbReference>
<dbReference type="GO" id="GO:0030316">
    <property type="term" value="P:osteoclast differentiation"/>
    <property type="evidence" value="ECO:0007669"/>
    <property type="project" value="Ensembl"/>
</dbReference>
<dbReference type="GO" id="GO:0043123">
    <property type="term" value="P:positive regulation of canonical NF-kappaB signal transduction"/>
    <property type="evidence" value="ECO:0000250"/>
    <property type="project" value="UniProtKB"/>
</dbReference>
<dbReference type="GO" id="GO:0032735">
    <property type="term" value="P:positive regulation of interleukin-12 production"/>
    <property type="evidence" value="ECO:0007669"/>
    <property type="project" value="Ensembl"/>
</dbReference>
<dbReference type="GO" id="GO:0032743">
    <property type="term" value="P:positive regulation of interleukin-2 production"/>
    <property type="evidence" value="ECO:0007669"/>
    <property type="project" value="Ensembl"/>
</dbReference>
<dbReference type="GO" id="GO:0032755">
    <property type="term" value="P:positive regulation of interleukin-6 production"/>
    <property type="evidence" value="ECO:0007669"/>
    <property type="project" value="Ensembl"/>
</dbReference>
<dbReference type="GO" id="GO:0046330">
    <property type="term" value="P:positive regulation of JNK cascade"/>
    <property type="evidence" value="ECO:0007669"/>
    <property type="project" value="Ensembl"/>
</dbReference>
<dbReference type="GO" id="GO:1904996">
    <property type="term" value="P:positive regulation of leukocyte adhesion to vascular endothelial cell"/>
    <property type="evidence" value="ECO:0007669"/>
    <property type="project" value="Ensembl"/>
</dbReference>
<dbReference type="GO" id="GO:0031666">
    <property type="term" value="P:positive regulation of lipopolysaccharide-mediated signaling pathway"/>
    <property type="evidence" value="ECO:0007669"/>
    <property type="project" value="Ensembl"/>
</dbReference>
<dbReference type="GO" id="GO:0051092">
    <property type="term" value="P:positive regulation of NF-kappaB transcription factor activity"/>
    <property type="evidence" value="ECO:0000250"/>
    <property type="project" value="UniProtKB"/>
</dbReference>
<dbReference type="GO" id="GO:0045672">
    <property type="term" value="P:positive regulation of osteoclast differentiation"/>
    <property type="evidence" value="ECO:0007669"/>
    <property type="project" value="Ensembl"/>
</dbReference>
<dbReference type="GO" id="GO:0002726">
    <property type="term" value="P:positive regulation of T cell cytokine production"/>
    <property type="evidence" value="ECO:0007669"/>
    <property type="project" value="Ensembl"/>
</dbReference>
<dbReference type="GO" id="GO:0042102">
    <property type="term" value="P:positive regulation of T cell proliferation"/>
    <property type="evidence" value="ECO:0007669"/>
    <property type="project" value="Ensembl"/>
</dbReference>
<dbReference type="GO" id="GO:0045944">
    <property type="term" value="P:positive regulation of transcription by RNA polymerase II"/>
    <property type="evidence" value="ECO:0007669"/>
    <property type="project" value="Ensembl"/>
</dbReference>
<dbReference type="GO" id="GO:0032481">
    <property type="term" value="P:positive regulation of type I interferon production"/>
    <property type="evidence" value="ECO:0007669"/>
    <property type="project" value="Ensembl"/>
</dbReference>
<dbReference type="GO" id="GO:0051865">
    <property type="term" value="P:protein autoubiquitination"/>
    <property type="evidence" value="ECO:0007669"/>
    <property type="project" value="Ensembl"/>
</dbReference>
<dbReference type="GO" id="GO:0141198">
    <property type="term" value="P:protein branched polyubiquitination"/>
    <property type="evidence" value="ECO:0000250"/>
    <property type="project" value="UniProtKB"/>
</dbReference>
<dbReference type="GO" id="GO:0070534">
    <property type="term" value="P:protein K63-linked ubiquitination"/>
    <property type="evidence" value="ECO:0000250"/>
    <property type="project" value="UniProtKB"/>
</dbReference>
<dbReference type="GO" id="GO:0042981">
    <property type="term" value="P:regulation of apoptotic process"/>
    <property type="evidence" value="ECO:0007669"/>
    <property type="project" value="InterPro"/>
</dbReference>
<dbReference type="GO" id="GO:0002637">
    <property type="term" value="P:regulation of immunoglobulin production"/>
    <property type="evidence" value="ECO:0007669"/>
    <property type="project" value="Ensembl"/>
</dbReference>
<dbReference type="GO" id="GO:0098696">
    <property type="term" value="P:regulation of neurotransmitter receptor localization to postsynaptic specialization membrane"/>
    <property type="evidence" value="ECO:0007669"/>
    <property type="project" value="Ensembl"/>
</dbReference>
<dbReference type="GO" id="GO:0050852">
    <property type="term" value="P:T cell receptor signaling pathway"/>
    <property type="evidence" value="ECO:0007669"/>
    <property type="project" value="Ensembl"/>
</dbReference>
<dbReference type="GO" id="GO:0042088">
    <property type="term" value="P:T-helper 1 type immune response"/>
    <property type="evidence" value="ECO:0007669"/>
    <property type="project" value="Ensembl"/>
</dbReference>
<dbReference type="GO" id="GO:0034142">
    <property type="term" value="P:toll-like receptor 4 signaling pathway"/>
    <property type="evidence" value="ECO:0007669"/>
    <property type="project" value="Ensembl"/>
</dbReference>
<dbReference type="GO" id="GO:0033209">
    <property type="term" value="P:tumor necrosis factor-mediated signaling pathway"/>
    <property type="evidence" value="ECO:0007669"/>
    <property type="project" value="Ensembl"/>
</dbReference>
<dbReference type="CDD" id="cd03776">
    <property type="entry name" value="MATH_TRAF6"/>
    <property type="match status" value="1"/>
</dbReference>
<dbReference type="CDD" id="cd16643">
    <property type="entry name" value="mRING-HC-C3HC3D_TRAF6"/>
    <property type="match status" value="1"/>
</dbReference>
<dbReference type="FunFam" id="2.60.210.10:FF:000010">
    <property type="entry name" value="TNF receptor-associated factor"/>
    <property type="match status" value="1"/>
</dbReference>
<dbReference type="FunFam" id="3.30.40.10:FF:000179">
    <property type="entry name" value="TNF receptor-associated factor"/>
    <property type="match status" value="1"/>
</dbReference>
<dbReference type="FunFam" id="3.30.40.10:FF:000211">
    <property type="entry name" value="TNF receptor-associated factor"/>
    <property type="match status" value="1"/>
</dbReference>
<dbReference type="FunFam" id="3.30.40.10:FF:000289">
    <property type="entry name" value="TNF receptor-associated factor"/>
    <property type="match status" value="1"/>
</dbReference>
<dbReference type="Gene3D" id="2.60.210.10">
    <property type="entry name" value="Apoptosis, Tumor Necrosis Factor Receptor Associated Protein 2, Chain A"/>
    <property type="match status" value="1"/>
</dbReference>
<dbReference type="Gene3D" id="3.30.40.10">
    <property type="entry name" value="Zinc/RING finger domain, C3HC4 (zinc finger)"/>
    <property type="match status" value="3"/>
</dbReference>
<dbReference type="InterPro" id="IPR002083">
    <property type="entry name" value="MATH/TRAF_dom"/>
</dbReference>
<dbReference type="InterPro" id="IPR012227">
    <property type="entry name" value="TNF_rcpt-assoc_TRAF_met"/>
</dbReference>
<dbReference type="InterPro" id="IPR008974">
    <property type="entry name" value="TRAF-like"/>
</dbReference>
<dbReference type="InterPro" id="IPR049342">
    <property type="entry name" value="TRAF1-6_MATH_dom"/>
</dbReference>
<dbReference type="InterPro" id="IPR037309">
    <property type="entry name" value="TRAF6_MATH"/>
</dbReference>
<dbReference type="InterPro" id="IPR027139">
    <property type="entry name" value="TRAF6_RING-HC"/>
</dbReference>
<dbReference type="InterPro" id="IPR041310">
    <property type="entry name" value="TRAF6_Z2"/>
</dbReference>
<dbReference type="InterPro" id="IPR001841">
    <property type="entry name" value="Znf_RING"/>
</dbReference>
<dbReference type="InterPro" id="IPR013083">
    <property type="entry name" value="Znf_RING/FYVE/PHD"/>
</dbReference>
<dbReference type="InterPro" id="IPR017907">
    <property type="entry name" value="Znf_RING_CS"/>
</dbReference>
<dbReference type="InterPro" id="IPR001293">
    <property type="entry name" value="Znf_TRAF"/>
</dbReference>
<dbReference type="PANTHER" id="PTHR10131">
    <property type="entry name" value="TNF RECEPTOR ASSOCIATED FACTOR"/>
    <property type="match status" value="1"/>
</dbReference>
<dbReference type="PANTHER" id="PTHR10131:SF152">
    <property type="entry name" value="TNF RECEPTOR-ASSOCIATED FACTOR 6"/>
    <property type="match status" value="1"/>
</dbReference>
<dbReference type="Pfam" id="PF21355">
    <property type="entry name" value="TRAF-mep_MATH"/>
    <property type="match status" value="1"/>
</dbReference>
<dbReference type="Pfam" id="PF18048">
    <property type="entry name" value="TRAF6_Z2"/>
    <property type="match status" value="1"/>
</dbReference>
<dbReference type="Pfam" id="PF13923">
    <property type="entry name" value="zf-C3HC4_2"/>
    <property type="match status" value="1"/>
</dbReference>
<dbReference type="Pfam" id="PF02176">
    <property type="entry name" value="zf-TRAF"/>
    <property type="match status" value="1"/>
</dbReference>
<dbReference type="PIRSF" id="PIRSF015614">
    <property type="entry name" value="TRAF"/>
    <property type="match status" value="1"/>
</dbReference>
<dbReference type="SMART" id="SM00061">
    <property type="entry name" value="MATH"/>
    <property type="match status" value="1"/>
</dbReference>
<dbReference type="SMART" id="SM00184">
    <property type="entry name" value="RING"/>
    <property type="match status" value="1"/>
</dbReference>
<dbReference type="SUPFAM" id="SSF57850">
    <property type="entry name" value="RING/U-box"/>
    <property type="match status" value="1"/>
</dbReference>
<dbReference type="SUPFAM" id="SSF49599">
    <property type="entry name" value="TRAF domain-like"/>
    <property type="match status" value="3"/>
</dbReference>
<dbReference type="PROSITE" id="PS50144">
    <property type="entry name" value="MATH"/>
    <property type="match status" value="1"/>
</dbReference>
<dbReference type="PROSITE" id="PS00518">
    <property type="entry name" value="ZF_RING_1"/>
    <property type="match status" value="1"/>
</dbReference>
<dbReference type="PROSITE" id="PS50089">
    <property type="entry name" value="ZF_RING_2"/>
    <property type="match status" value="1"/>
</dbReference>
<dbReference type="PROSITE" id="PS50145">
    <property type="entry name" value="ZF_TRAF"/>
    <property type="match status" value="2"/>
</dbReference>